<comment type="function">
    <text evidence="1 2 7 8 9 10 11 12">Multifunctional ATP-dependent RNA helicase (PubMed:27546789). Plays a role in RNA remodeling, but is not required for RNA unwinding (PubMed:27546789). Binds to RNA in a concentration-dependent manner to stimulate annealing between two complementary strands of RNA (PubMed:26015579, PubMed:27546789). This process is also dependent upon ATP; ATP reduces binding to RNA and subsequently diminishes RNA annealing (PubMed:27546789). Involved in many cellular processes, which do not necessarily require its ATPase/helicase catalytic activities. Involved in the regulation of transcription and translation initiation. Involved in innate immunity (By similarity). Involved in both stress and inflammatory responses (By similarity). Promotes liquid-liquid phase separation of P granules, which is a process important for intracellular organization and stress granule assembly (PubMed:26015579). Required for embryonic development (PubMed:19361491, PubMed:26015579). Plays a role in sexual cell fate determination by negatively regulating the translation of the sex determining protein tra-2 (PubMed:26015579, PubMed:9043090, PubMed:9321409). May play a protective role in the response to heat and oxidative stress (PubMed:24844228). May negatively regulate extrinsic apoptotic signaling pathway via death domain receptors. May be involved in mitotic chromosome segregation (By similarity).</text>
</comment>
<comment type="catalytic activity">
    <reaction evidence="10">
        <text>ATP + H2O = ADP + phosphate + H(+)</text>
        <dbReference type="Rhea" id="RHEA:13065"/>
        <dbReference type="ChEBI" id="CHEBI:15377"/>
        <dbReference type="ChEBI" id="CHEBI:15378"/>
        <dbReference type="ChEBI" id="CHEBI:30616"/>
        <dbReference type="ChEBI" id="CHEBI:43474"/>
        <dbReference type="ChEBI" id="CHEBI:456216"/>
        <dbReference type="EC" id="3.6.4.13"/>
    </reaction>
</comment>
<comment type="biophysicochemical properties">
    <kinetics>
        <KM evidence="10">1.3156 mM for ATP</KM>
    </kinetics>
</comment>
<comment type="subunit">
    <text evidence="10">Binds RNA as a monomer at low laf-1 concentrations and as a dimer at high laf-1 concentrations.</text>
</comment>
<comment type="subcellular location">
    <subcellularLocation>
        <location evidence="7 9">Cytoplasm</location>
    </subcellularLocation>
    <subcellularLocation>
        <location evidence="7 9">Cytoplasmic granule</location>
    </subcellularLocation>
    <subcellularLocation>
        <location evidence="1">Nucleus</location>
    </subcellularLocation>
    <subcellularLocation>
        <location evidence="1">Cytoplasm</location>
        <location evidence="1">Stress granule</location>
    </subcellularLocation>
    <subcellularLocation>
        <location evidence="2">Inflammasome</location>
    </subcellularLocation>
    <subcellularLocation>
        <location evidence="1">Cell membrane</location>
    </subcellularLocation>
    <subcellularLocation>
        <location evidence="1">Cell projection</location>
        <location evidence="1">Lamellipodium</location>
    </subcellularLocation>
    <text evidence="1 7">Localizes to P granules in germline precursor cells. Shuttles between the nucleus and the cytosol (By similarity).</text>
</comment>
<comment type="tissue specificity">
    <text evidence="7">Expressed in the germline and soma of young adult hermaphrodites.</text>
</comment>
<comment type="developmental stage">
    <text evidence="7">Expressed at all developmental stages. Highly expressed in embryos with levels decreasing during larval development and increasing as animals reach adulthood.</text>
</comment>
<comment type="domain">
    <text evidence="9 10">The N-terminal domain is required for the multimeric binding of laf-1 to RNA.</text>
</comment>
<comment type="disruption phenotype">
    <text evidence="7 8 9 11">Embryonic lethal or lethal at the first larval stage of development (PubMed:9043090). Embryos exhibit severe morphological defects (PubMed:9043090). RNAi-mediated knockdown results in embryonic lethality in 88% of animals (PubMed:19361491, PubMed:26015579). Knockdown also results in disrupted P granule organization and assembly in the early embryo (PubMed:26015579). Reduced survival in response to heat and oxidative stress (PubMed:24844228). Double RNAi knockdown with vbh-1 results in a high number of female offspring (PubMed:19361491).</text>
</comment>
<comment type="similarity">
    <text evidence="14">Belongs to the DEAD box helicase family. DDX3/DED1 subfamily.</text>
</comment>
<protein>
    <recommendedName>
        <fullName evidence="14">ATP-dependent RNA helicase laf-1</fullName>
        <ecNumber evidence="10">3.6.4.13</ecNumber>
    </recommendedName>
    <alternativeName>
        <fullName evidence="13">DEAD-box RNA helicase laf-1</fullName>
    </alternativeName>
</protein>
<proteinExistence type="evidence at protein level"/>
<organism evidence="15">
    <name type="scientific">Caenorhabditis elegans</name>
    <dbReference type="NCBI Taxonomy" id="6239"/>
    <lineage>
        <taxon>Eukaryota</taxon>
        <taxon>Metazoa</taxon>
        <taxon>Ecdysozoa</taxon>
        <taxon>Nematoda</taxon>
        <taxon>Chromadorea</taxon>
        <taxon>Rhabditida</taxon>
        <taxon>Rhabditina</taxon>
        <taxon>Rhabditomorpha</taxon>
        <taxon>Rhabditoidea</taxon>
        <taxon>Rhabditidae</taxon>
        <taxon>Peloderinae</taxon>
        <taxon>Caenorhabditis</taxon>
    </lineage>
</organism>
<feature type="chain" id="PRO_0000438522" description="ATP-dependent RNA helicase laf-1" evidence="14">
    <location>
        <begin position="1"/>
        <end position="708"/>
    </location>
</feature>
<feature type="domain" description="Helicase ATP-binding" evidence="3">
    <location>
        <begin position="262"/>
        <end position="453"/>
    </location>
</feature>
<feature type="domain" description="Helicase C-terminal" evidence="4">
    <location>
        <begin position="465"/>
        <end position="626"/>
    </location>
</feature>
<feature type="region of interest" description="Disordered" evidence="6">
    <location>
        <begin position="1"/>
        <end position="191"/>
    </location>
</feature>
<feature type="region of interest" description="Disordered" evidence="6">
    <location>
        <begin position="623"/>
        <end position="708"/>
    </location>
</feature>
<feature type="short sequence motif" description="Q motif" evidence="5">
    <location>
        <begin position="231"/>
        <end position="259"/>
    </location>
</feature>
<feature type="short sequence motif" description="DEAD box" evidence="3">
    <location>
        <begin position="397"/>
        <end position="400"/>
    </location>
</feature>
<feature type="compositionally biased region" description="Low complexity" evidence="6">
    <location>
        <begin position="1"/>
        <end position="21"/>
    </location>
</feature>
<feature type="compositionally biased region" description="Gly residues" evidence="6">
    <location>
        <begin position="48"/>
        <end position="70"/>
    </location>
</feature>
<feature type="compositionally biased region" description="Basic and acidic residues" evidence="6">
    <location>
        <begin position="72"/>
        <end position="83"/>
    </location>
</feature>
<feature type="compositionally biased region" description="Basic and acidic residues" evidence="6">
    <location>
        <begin position="90"/>
        <end position="99"/>
    </location>
</feature>
<feature type="compositionally biased region" description="Gly residues" evidence="6">
    <location>
        <begin position="100"/>
        <end position="123"/>
    </location>
</feature>
<feature type="compositionally biased region" description="Gly residues" evidence="6">
    <location>
        <begin position="630"/>
        <end position="647"/>
    </location>
</feature>
<feature type="compositionally biased region" description="Gly residues" evidence="6">
    <location>
        <begin position="656"/>
        <end position="692"/>
    </location>
</feature>
<feature type="compositionally biased region" description="Polar residues" evidence="6">
    <location>
        <begin position="699"/>
        <end position="708"/>
    </location>
</feature>
<feature type="binding site" evidence="3">
    <location>
        <begin position="275"/>
        <end position="282"/>
    </location>
    <ligand>
        <name>ATP</name>
        <dbReference type="ChEBI" id="CHEBI:30616"/>
    </ligand>
</feature>
<feature type="mutagenesis site" description="In q80; embryonic lethal." evidence="7">
    <original>R</original>
    <variation>C</variation>
    <location>
        <position position="426"/>
    </location>
</feature>
<feature type="mutagenesis site" description="In q217; embryonic lethal." evidence="7">
    <original>M</original>
    <variation>I</variation>
    <location>
        <position position="430"/>
    </location>
</feature>
<feature type="mutagenesis site" description="In q267; embryonic lethal." evidence="7">
    <original>T</original>
    <variation>I</variation>
    <location>
        <position position="434"/>
    </location>
</feature>
<evidence type="ECO:0000250" key="1">
    <source>
        <dbReference type="UniProtKB" id="O00571"/>
    </source>
</evidence>
<evidence type="ECO:0000250" key="2">
    <source>
        <dbReference type="UniProtKB" id="Q62167"/>
    </source>
</evidence>
<evidence type="ECO:0000255" key="3">
    <source>
        <dbReference type="PROSITE-ProRule" id="PRU00541"/>
    </source>
</evidence>
<evidence type="ECO:0000255" key="4">
    <source>
        <dbReference type="PROSITE-ProRule" id="PRU00542"/>
    </source>
</evidence>
<evidence type="ECO:0000255" key="5">
    <source>
        <dbReference type="PROSITE-ProRule" id="PRU00552"/>
    </source>
</evidence>
<evidence type="ECO:0000256" key="6">
    <source>
        <dbReference type="SAM" id="MobiDB-lite"/>
    </source>
</evidence>
<evidence type="ECO:0000269" key="7">
    <source>
    </source>
</evidence>
<evidence type="ECO:0000269" key="8">
    <source>
    </source>
</evidence>
<evidence type="ECO:0000269" key="9">
    <source>
    </source>
</evidence>
<evidence type="ECO:0000269" key="10">
    <source>
    </source>
</evidence>
<evidence type="ECO:0000269" key="11">
    <source>
    </source>
</evidence>
<evidence type="ECO:0000269" key="12">
    <source>
    </source>
</evidence>
<evidence type="ECO:0000303" key="13">
    <source>
    </source>
</evidence>
<evidence type="ECO:0000305" key="14"/>
<evidence type="ECO:0000312" key="15">
    <source>
        <dbReference type="Proteomes" id="UP000001940"/>
    </source>
</evidence>
<evidence type="ECO:0000312" key="16">
    <source>
        <dbReference type="WormBase" id="Y71H2AM.19"/>
    </source>
</evidence>
<accession>D0PV95</accession>
<accession>Q4W5R4</accession>
<name>DDX3_CAEEL</name>
<sequence length="708" mass="76343">MESNQSNNGGSGNAALNRGGRYVPPHLRGGDGGAAAAASAGGDDRRGGAGGGGYRRGGGNSGGGGGGGYDRGYNDNRDDRDNRGGSGGYGRDRNYEDRGYNGGGGGGGNRGYNNNRGGGGGGYNRQDRGDGGSSNFSRGGYNNRDEGSDNRGSGRSYNNDRRDNGGDGQNTRWNNLDAPPSRGTSKWENRGARDERIEQELFSGQLSGINFDKYEEIPVEATGDDVPQPISLFSDLSLHEWIEENIKTAGYDRPTPVQKYSIPALQGGRDLMSCAQTGSGKTAAFLVPLVNAILQDGPDAVHRSVTSSGGRKKQYPSALVLSPTRELSLQIFNESRKFAYRTPITSALLYGGRENYKDQIHKLRLGCHILIATPGRLIDVMDQGLIGMEGCRYLVLDEADRMLDMGFEPQIRQIVECNRMPSKEERITAMFSATFPKEIQLLAQDFLKENYVFLAVGRVGSTSENIMQKIVWVEEDEKRSYLMDLLDATGDSSLTLVFVETKRGASDLAYYLNRQNYEVVTIHGDLKQFEREKHLDLFRTGTAPILVATAVAARGLDIPNVKHVINYDLPSDVDEYVHRIGRTGRVGNVGLATSFFNDKNRNIARELMDLIVEANQELPDWLEGMSGDMRSGGGYRGRGGRGNGQRFGGRDHRYQGGSGNGGGGNGGGGGFGGGGQRSGGGGGFQSGGGGGRQQQQQQRAQPQQDWWS</sequence>
<dbReference type="EC" id="3.6.4.13" evidence="10"/>
<dbReference type="EMBL" id="FJ348231">
    <property type="protein sequence ID" value="ACO56244.1"/>
    <property type="molecule type" value="mRNA"/>
</dbReference>
<dbReference type="EMBL" id="BX284603">
    <property type="protein sequence ID" value="CCD73871.1"/>
    <property type="molecule type" value="Genomic_DNA"/>
</dbReference>
<dbReference type="EMBL" id="BX284603">
    <property type="protein sequence ID" value="CCG28150.1"/>
    <property type="molecule type" value="Genomic_DNA"/>
</dbReference>
<dbReference type="RefSeq" id="NP_001254858.1">
    <property type="nucleotide sequence ID" value="NM_001267929.1"/>
</dbReference>
<dbReference type="RefSeq" id="NP_001254859.1">
    <property type="nucleotide sequence ID" value="NM_001267930.4"/>
</dbReference>
<dbReference type="SMR" id="D0PV95"/>
<dbReference type="FunCoup" id="D0PV95">
    <property type="interactions" value="2279"/>
</dbReference>
<dbReference type="STRING" id="6239.Y71H2AM.19.1"/>
<dbReference type="PaxDb" id="6239-Y71H2AM.19"/>
<dbReference type="PeptideAtlas" id="D0PV95"/>
<dbReference type="EnsemblMetazoa" id="Y71H2AM.19.1">
    <property type="protein sequence ID" value="Y71H2AM.19.1"/>
    <property type="gene ID" value="WBGene00002244"/>
</dbReference>
<dbReference type="GeneID" id="190611"/>
<dbReference type="KEGG" id="cel:CELE_Y71H2AM.19"/>
<dbReference type="AGR" id="WB:WBGene00002244"/>
<dbReference type="CTD" id="190611"/>
<dbReference type="WormBase" id="Y71H2AM.19">
    <property type="protein sequence ID" value="CE47305"/>
    <property type="gene ID" value="WBGene00002244"/>
    <property type="gene designation" value="laf-1"/>
</dbReference>
<dbReference type="eggNOG" id="KOG0335">
    <property type="taxonomic scope" value="Eukaryota"/>
</dbReference>
<dbReference type="GeneTree" id="ENSGT00940000168275"/>
<dbReference type="InParanoid" id="D0PV95"/>
<dbReference type="OMA" id="SYAGMQP"/>
<dbReference type="OrthoDB" id="196131at2759"/>
<dbReference type="PhylomeDB" id="D0PV95"/>
<dbReference type="Reactome" id="R-CEL-6798695">
    <property type="pathway name" value="Neutrophil degranulation"/>
</dbReference>
<dbReference type="CD-CODE" id="0CEEA3E8">
    <property type="entry name" value="Synthetic Condensate 000006"/>
</dbReference>
<dbReference type="CD-CODE" id="73A75392">
    <property type="entry name" value="P-granule"/>
</dbReference>
<dbReference type="CD-CODE" id="74574544">
    <property type="entry name" value="Synthetic Condensate 000020"/>
</dbReference>
<dbReference type="CD-CODE" id="AC87FF17">
    <property type="entry name" value="Synthetic Condensate 000021"/>
</dbReference>
<dbReference type="CD-CODE" id="D57F7ABA">
    <property type="entry name" value="Synthetic Condensate 000274"/>
</dbReference>
<dbReference type="CD-CODE" id="FF9FC9E0">
    <property type="entry name" value="Synthetic Condensate 000016"/>
</dbReference>
<dbReference type="PRO" id="PR:D0PV95"/>
<dbReference type="Proteomes" id="UP000001940">
    <property type="component" value="Chromosome III"/>
</dbReference>
<dbReference type="Bgee" id="WBGene00002244">
    <property type="expression patterns" value="Expressed in pharyngeal muscle cell (C elegans) and 3 other cell types or tissues"/>
</dbReference>
<dbReference type="GO" id="GO:0061702">
    <property type="term" value="C:canonical inflammasome complex"/>
    <property type="evidence" value="ECO:0007669"/>
    <property type="project" value="UniProtKB-SubCell"/>
</dbReference>
<dbReference type="GO" id="GO:0031252">
    <property type="term" value="C:cell leading edge"/>
    <property type="evidence" value="ECO:0000250"/>
    <property type="project" value="UniProtKB"/>
</dbReference>
<dbReference type="GO" id="GO:0005737">
    <property type="term" value="C:cytoplasm"/>
    <property type="evidence" value="ECO:0000314"/>
    <property type="project" value="WormBase"/>
</dbReference>
<dbReference type="GO" id="GO:0010494">
    <property type="term" value="C:cytoplasmic stress granule"/>
    <property type="evidence" value="ECO:0007669"/>
    <property type="project" value="UniProtKB-SubCell"/>
</dbReference>
<dbReference type="GO" id="GO:0030027">
    <property type="term" value="C:lamellipodium"/>
    <property type="evidence" value="ECO:0007669"/>
    <property type="project" value="UniProtKB-SubCell"/>
</dbReference>
<dbReference type="GO" id="GO:0005634">
    <property type="term" value="C:nucleus"/>
    <property type="evidence" value="ECO:0000318"/>
    <property type="project" value="GO_Central"/>
</dbReference>
<dbReference type="GO" id="GO:0043186">
    <property type="term" value="C:P granule"/>
    <property type="evidence" value="ECO:0000314"/>
    <property type="project" value="WormBase"/>
</dbReference>
<dbReference type="GO" id="GO:0005886">
    <property type="term" value="C:plasma membrane"/>
    <property type="evidence" value="ECO:0007669"/>
    <property type="project" value="UniProtKB-SubCell"/>
</dbReference>
<dbReference type="GO" id="GO:0005524">
    <property type="term" value="F:ATP binding"/>
    <property type="evidence" value="ECO:0007669"/>
    <property type="project" value="UniProtKB-KW"/>
</dbReference>
<dbReference type="GO" id="GO:0016887">
    <property type="term" value="F:ATP hydrolysis activity"/>
    <property type="evidence" value="ECO:0007669"/>
    <property type="project" value="RHEA"/>
</dbReference>
<dbReference type="GO" id="GO:0042802">
    <property type="term" value="F:identical protein binding"/>
    <property type="evidence" value="ECO:0000314"/>
    <property type="project" value="UniProtKB"/>
</dbReference>
<dbReference type="GO" id="GO:0140693">
    <property type="term" value="F:molecular condensate scaffold activity"/>
    <property type="evidence" value="ECO:0000314"/>
    <property type="project" value="DisProt"/>
</dbReference>
<dbReference type="GO" id="GO:0003729">
    <property type="term" value="F:mRNA binding"/>
    <property type="evidence" value="ECO:0000318"/>
    <property type="project" value="GO_Central"/>
</dbReference>
<dbReference type="GO" id="GO:0003724">
    <property type="term" value="F:RNA helicase activity"/>
    <property type="evidence" value="ECO:0000318"/>
    <property type="project" value="GO_Central"/>
</dbReference>
<dbReference type="GO" id="GO:0033592">
    <property type="term" value="F:RNA strand annealing activity"/>
    <property type="evidence" value="ECO:0000315"/>
    <property type="project" value="UniProtKB"/>
</dbReference>
<dbReference type="GO" id="GO:0030154">
    <property type="term" value="P:cell differentiation"/>
    <property type="evidence" value="ECO:0000318"/>
    <property type="project" value="GO_Central"/>
</dbReference>
<dbReference type="GO" id="GO:0007276">
    <property type="term" value="P:gamete generation"/>
    <property type="evidence" value="ECO:0000318"/>
    <property type="project" value="GO_Central"/>
</dbReference>
<dbReference type="GO" id="GO:0042006">
    <property type="term" value="P:masculinization of hermaphroditic germ-line"/>
    <property type="evidence" value="ECO:0000315"/>
    <property type="project" value="UniProtKB"/>
</dbReference>
<dbReference type="GO" id="GO:0010629">
    <property type="term" value="P:negative regulation of gene expression"/>
    <property type="evidence" value="ECO:0000315"/>
    <property type="project" value="UniProtKB"/>
</dbReference>
<dbReference type="GO" id="GO:0040019">
    <property type="term" value="P:positive regulation of embryonic development"/>
    <property type="evidence" value="ECO:0000315"/>
    <property type="project" value="UniProtKB"/>
</dbReference>
<dbReference type="GO" id="GO:1905516">
    <property type="term" value="P:positive regulation of fertilization"/>
    <property type="evidence" value="ECO:0000315"/>
    <property type="project" value="UniProtKB"/>
</dbReference>
<dbReference type="GO" id="GO:0006417">
    <property type="term" value="P:regulation of translation"/>
    <property type="evidence" value="ECO:0007669"/>
    <property type="project" value="UniProtKB-KW"/>
</dbReference>
<dbReference type="CDD" id="cd17967">
    <property type="entry name" value="DEADc_DDX3_DDX4"/>
    <property type="match status" value="1"/>
</dbReference>
<dbReference type="CDD" id="cd18787">
    <property type="entry name" value="SF2_C_DEAD"/>
    <property type="match status" value="1"/>
</dbReference>
<dbReference type="DisProt" id="DP01113"/>
<dbReference type="FunFam" id="3.40.50.300:FF:000008">
    <property type="entry name" value="ATP-dependent RNA helicase RhlB"/>
    <property type="match status" value="1"/>
</dbReference>
<dbReference type="FunFam" id="3.40.50.300:FF:000397">
    <property type="entry name" value="Probable ATP-dependent RNA helicase DDX4"/>
    <property type="match status" value="1"/>
</dbReference>
<dbReference type="Gene3D" id="3.40.50.300">
    <property type="entry name" value="P-loop containing nucleotide triphosphate hydrolases"/>
    <property type="match status" value="2"/>
</dbReference>
<dbReference type="IDEAL" id="IID50296"/>
<dbReference type="InterPro" id="IPR011545">
    <property type="entry name" value="DEAD/DEAH_box_helicase_dom"/>
</dbReference>
<dbReference type="InterPro" id="IPR044763">
    <property type="entry name" value="Ded1/Dbp1_DEADc"/>
</dbReference>
<dbReference type="InterPro" id="IPR014001">
    <property type="entry name" value="Helicase_ATP-bd"/>
</dbReference>
<dbReference type="InterPro" id="IPR001650">
    <property type="entry name" value="Helicase_C-like"/>
</dbReference>
<dbReference type="InterPro" id="IPR027417">
    <property type="entry name" value="P-loop_NTPase"/>
</dbReference>
<dbReference type="InterPro" id="IPR000629">
    <property type="entry name" value="RNA-helicase_DEAD-box_CS"/>
</dbReference>
<dbReference type="InterPro" id="IPR014014">
    <property type="entry name" value="RNA_helicase_DEAD_Q_motif"/>
</dbReference>
<dbReference type="PANTHER" id="PTHR47958">
    <property type="entry name" value="ATP-DEPENDENT RNA HELICASE DBP3"/>
    <property type="match status" value="1"/>
</dbReference>
<dbReference type="Pfam" id="PF00270">
    <property type="entry name" value="DEAD"/>
    <property type="match status" value="1"/>
</dbReference>
<dbReference type="Pfam" id="PF00271">
    <property type="entry name" value="Helicase_C"/>
    <property type="match status" value="1"/>
</dbReference>
<dbReference type="SMART" id="SM00487">
    <property type="entry name" value="DEXDc"/>
    <property type="match status" value="1"/>
</dbReference>
<dbReference type="SMART" id="SM00490">
    <property type="entry name" value="HELICc"/>
    <property type="match status" value="1"/>
</dbReference>
<dbReference type="SUPFAM" id="SSF52540">
    <property type="entry name" value="P-loop containing nucleoside triphosphate hydrolases"/>
    <property type="match status" value="1"/>
</dbReference>
<dbReference type="PROSITE" id="PS00039">
    <property type="entry name" value="DEAD_ATP_HELICASE"/>
    <property type="match status" value="1"/>
</dbReference>
<dbReference type="PROSITE" id="PS51192">
    <property type="entry name" value="HELICASE_ATP_BIND_1"/>
    <property type="match status" value="1"/>
</dbReference>
<dbReference type="PROSITE" id="PS51194">
    <property type="entry name" value="HELICASE_CTER"/>
    <property type="match status" value="1"/>
</dbReference>
<dbReference type="PROSITE" id="PS51195">
    <property type="entry name" value="Q_MOTIF"/>
    <property type="match status" value="1"/>
</dbReference>
<reference evidence="14" key="1">
    <citation type="journal article" date="2009" name="Dev. Biol.">
        <title>The C. elegans sex determination gene laf-1 encodes a putative DEAD-box RNA helicase.</title>
        <authorList>
            <person name="Hubert A."/>
            <person name="Anderson P."/>
        </authorList>
    </citation>
    <scope>NUCLEOTIDE SEQUENCE [MRNA]</scope>
    <scope>FUNCTION</scope>
    <scope>SUBCELLULAR LOCATION</scope>
    <scope>TISSUE SPECIFICITY</scope>
    <scope>DEVELOPMENTAL STAGE</scope>
    <scope>DISRUPTION PHENOTYPE</scope>
    <scope>MUTAGENESIS OF ARG-426; MET-430 AND THR-434</scope>
</reference>
<reference evidence="15" key="2">
    <citation type="journal article" date="1998" name="Science">
        <title>Genome sequence of the nematode C. elegans: a platform for investigating biology.</title>
        <authorList>
            <consortium name="The C. elegans sequencing consortium"/>
        </authorList>
    </citation>
    <scope>NUCLEOTIDE SEQUENCE [LARGE SCALE GENOMIC DNA]</scope>
    <source>
        <strain evidence="15">Bristol N2</strain>
    </source>
</reference>
<reference evidence="14" key="3">
    <citation type="journal article" date="1997" name="Development">
        <title>A genetic pathway for regulation of tra-2 translation.</title>
        <authorList>
            <person name="Goodwin E.B."/>
            <person name="Hofstra K."/>
            <person name="Hurney C.A."/>
            <person name="Mango S."/>
            <person name="Kimble J."/>
        </authorList>
    </citation>
    <scope>FUNCTION</scope>
    <scope>DISRUPTION PHENOTYPE</scope>
</reference>
<reference evidence="14" key="4">
    <citation type="journal article" date="1997" name="EMBO J.">
        <title>Conservation of the C.elegans tra-2 3'UTR translational control.</title>
        <authorList>
            <person name="Jan E."/>
            <person name="Yoon J.W."/>
            <person name="Walterhouse D."/>
            <person name="Iannaccone P."/>
            <person name="Goodwin E.B."/>
        </authorList>
    </citation>
    <scope>FUNCTION</scope>
</reference>
<reference evidence="14" key="5">
    <citation type="journal article" date="2014" name="PLoS ONE">
        <title>The DEAD Box RNA helicase VBH-1 is a new player in the stress response in C. elegans.</title>
        <authorList>
            <person name="Paz-Gomez D."/>
            <person name="Villanueva-Chimal E."/>
            <person name="Navarro R.E."/>
        </authorList>
    </citation>
    <scope>FUNCTION</scope>
    <scope>DISRUPTION PHENOTYPE</scope>
</reference>
<reference evidence="14" key="6">
    <citation type="journal article" date="2015" name="Proc. Natl. Acad. Sci. U.S.A.">
        <title>The disordered P granule protein LAF-1 drives phase separation into droplets with tunable viscosity and dynamics.</title>
        <authorList>
            <person name="Elbaum-Garfinkle S."/>
            <person name="Kim Y."/>
            <person name="Szczepaniak K."/>
            <person name="Chen C.C."/>
            <person name="Eckmann C.R."/>
            <person name="Myong S."/>
            <person name="Brangwynne C.P."/>
        </authorList>
    </citation>
    <scope>FUNCTION</scope>
    <scope>SUBCELLULAR LOCATION</scope>
    <scope>DOMAIN</scope>
    <scope>DISRUPTION PHENOTYPE</scope>
</reference>
<reference evidence="14" key="7">
    <citation type="journal article" date="2016" name="Mol. Cell">
        <title>RNA remodeling activity of DEAD box proteins tuned by protein concentration, RNA length, and ATP.</title>
        <authorList>
            <person name="Kim Y."/>
            <person name="Myong S."/>
        </authorList>
    </citation>
    <scope>FUNCTION</scope>
    <scope>CATALYTIC ACTIVITY</scope>
    <scope>BIOPHYSICOCHEMICAL PROPERTIES</scope>
    <scope>SUBUNIT</scope>
    <scope>DOMAIN</scope>
</reference>
<gene>
    <name evidence="13 16" type="primary">laf-1</name>
    <name evidence="16" type="ORF">Y71H2AM.19</name>
</gene>
<keyword id="KW-0067">ATP-binding</keyword>
<keyword id="KW-1003">Cell membrane</keyword>
<keyword id="KW-0966">Cell projection</keyword>
<keyword id="KW-0963">Cytoplasm</keyword>
<keyword id="KW-0347">Helicase</keyword>
<keyword id="KW-0378">Hydrolase</keyword>
<keyword id="KW-1271">Inflammasome</keyword>
<keyword id="KW-0472">Membrane</keyword>
<keyword id="KW-0547">Nucleotide-binding</keyword>
<keyword id="KW-0539">Nucleus</keyword>
<keyword id="KW-1185">Reference proteome</keyword>
<keyword id="KW-0694">RNA-binding</keyword>
<keyword id="KW-0804">Transcription</keyword>
<keyword id="KW-0805">Transcription regulation</keyword>
<keyword id="KW-0810">Translation regulation</keyword>